<sequence>MNNLNQTIVAPTTNISTQAISLIRISGDDSFNIINKLLKTKIKEEKNVWVRKMFDGQELVDEVVITSFVSPASFTGENVVEIACHGGILNTQRIINLIIKNGARMANKGEFSQRAFLNNKIDLIQAEGINDLIFAKNELALKIGVNNMSGAHNQSIINLKGNLLDIISRIQVSIDYPDYDDVEGSSIPELAKALSGINEEVNNLLKRSKMAIKNTNGIKTAIVGKTNVGKSSLLNALLNEDKAIVTDIHGTTRDIVTGEINLENISLNLIDTAGIRETTDIVEGLGIEKSLKIIDEAELVLFVVDFKSINDEENKMIFDKLENKNYILVFNKSEFINDIERNKIKDLHNNFVYTSAINNDIDNLIMKIEQMHINEEIINNDSLILINLQQITLVEQVKDRLEKSLNAIIGGMPIDIVNVDLHEAWDYLNQLIGEQYDEEIIDNIFKKYCLGK</sequence>
<keyword id="KW-0963">Cytoplasm</keyword>
<keyword id="KW-0342">GTP-binding</keyword>
<keyword id="KW-0378">Hydrolase</keyword>
<keyword id="KW-0460">Magnesium</keyword>
<keyword id="KW-0479">Metal-binding</keyword>
<keyword id="KW-0547">Nucleotide-binding</keyword>
<keyword id="KW-0630">Potassium</keyword>
<keyword id="KW-1185">Reference proteome</keyword>
<keyword id="KW-0819">tRNA processing</keyword>
<gene>
    <name evidence="1" type="primary">mnmE</name>
    <name evidence="1" type="synonym">trmE</name>
    <name type="ordered locus">Mfl014</name>
</gene>
<evidence type="ECO:0000255" key="1">
    <source>
        <dbReference type="HAMAP-Rule" id="MF_00379"/>
    </source>
</evidence>
<protein>
    <recommendedName>
        <fullName evidence="1">tRNA modification GTPase MnmE</fullName>
        <ecNumber evidence="1">3.6.-.-</ecNumber>
    </recommendedName>
</protein>
<feature type="chain" id="PRO_0000345828" description="tRNA modification GTPase MnmE">
    <location>
        <begin position="1"/>
        <end position="452"/>
    </location>
</feature>
<feature type="domain" description="TrmE-type G">
    <location>
        <begin position="217"/>
        <end position="373"/>
    </location>
</feature>
<feature type="binding site" evidence="1">
    <location>
        <position position="24"/>
    </location>
    <ligand>
        <name>(6S)-5-formyl-5,6,7,8-tetrahydrofolate</name>
        <dbReference type="ChEBI" id="CHEBI:57457"/>
    </ligand>
</feature>
<feature type="binding site" evidence="1">
    <location>
        <position position="81"/>
    </location>
    <ligand>
        <name>(6S)-5-formyl-5,6,7,8-tetrahydrofolate</name>
        <dbReference type="ChEBI" id="CHEBI:57457"/>
    </ligand>
</feature>
<feature type="binding site" evidence="1">
    <location>
        <position position="120"/>
    </location>
    <ligand>
        <name>(6S)-5-formyl-5,6,7,8-tetrahydrofolate</name>
        <dbReference type="ChEBI" id="CHEBI:57457"/>
    </ligand>
</feature>
<feature type="binding site" evidence="1">
    <location>
        <begin position="227"/>
        <end position="232"/>
    </location>
    <ligand>
        <name>GTP</name>
        <dbReference type="ChEBI" id="CHEBI:37565"/>
    </ligand>
</feature>
<feature type="binding site" evidence="1">
    <location>
        <position position="227"/>
    </location>
    <ligand>
        <name>K(+)</name>
        <dbReference type="ChEBI" id="CHEBI:29103"/>
    </ligand>
</feature>
<feature type="binding site" evidence="1">
    <location>
        <position position="231"/>
    </location>
    <ligand>
        <name>Mg(2+)</name>
        <dbReference type="ChEBI" id="CHEBI:18420"/>
    </ligand>
</feature>
<feature type="binding site" evidence="1">
    <location>
        <begin position="246"/>
        <end position="252"/>
    </location>
    <ligand>
        <name>GTP</name>
        <dbReference type="ChEBI" id="CHEBI:37565"/>
    </ligand>
</feature>
<feature type="binding site" evidence="1">
    <location>
        <position position="246"/>
    </location>
    <ligand>
        <name>K(+)</name>
        <dbReference type="ChEBI" id="CHEBI:29103"/>
    </ligand>
</feature>
<feature type="binding site" evidence="1">
    <location>
        <position position="248"/>
    </location>
    <ligand>
        <name>K(+)</name>
        <dbReference type="ChEBI" id="CHEBI:29103"/>
    </ligand>
</feature>
<feature type="binding site" evidence="1">
    <location>
        <position position="251"/>
    </location>
    <ligand>
        <name>K(+)</name>
        <dbReference type="ChEBI" id="CHEBI:29103"/>
    </ligand>
</feature>
<feature type="binding site" evidence="1">
    <location>
        <position position="252"/>
    </location>
    <ligand>
        <name>Mg(2+)</name>
        <dbReference type="ChEBI" id="CHEBI:18420"/>
    </ligand>
</feature>
<feature type="binding site" evidence="1">
    <location>
        <begin position="271"/>
        <end position="274"/>
    </location>
    <ligand>
        <name>GTP</name>
        <dbReference type="ChEBI" id="CHEBI:37565"/>
    </ligand>
</feature>
<feature type="binding site" evidence="1">
    <location>
        <position position="452"/>
    </location>
    <ligand>
        <name>(6S)-5-formyl-5,6,7,8-tetrahydrofolate</name>
        <dbReference type="ChEBI" id="CHEBI:57457"/>
    </ligand>
</feature>
<reference key="1">
    <citation type="submission" date="2004-06" db="EMBL/GenBank/DDBJ databases">
        <authorList>
            <person name="Birren B.W."/>
            <person name="Stange-Thomann N."/>
            <person name="Hafez N."/>
            <person name="DeCaprio D."/>
            <person name="Fisher S."/>
            <person name="Butler J."/>
            <person name="Elkins T."/>
            <person name="Kodira C.D."/>
            <person name="Major J."/>
            <person name="Wang S."/>
            <person name="Nicol R."/>
            <person name="Nusbaum C."/>
        </authorList>
    </citation>
    <scope>NUCLEOTIDE SEQUENCE [LARGE SCALE GENOMIC DNA]</scope>
    <source>
        <strain>ATCC 33453 / NBRC 100688 / NCTC 11704 / L1</strain>
    </source>
</reference>
<comment type="function">
    <text evidence="1">Exhibits a very high intrinsic GTPase hydrolysis rate. Involved in the addition of a carboxymethylaminomethyl (cmnm) group at the wobble position (U34) of certain tRNAs, forming tRNA-cmnm(5)s(2)U34.</text>
</comment>
<comment type="cofactor">
    <cofactor evidence="1">
        <name>K(+)</name>
        <dbReference type="ChEBI" id="CHEBI:29103"/>
    </cofactor>
    <text evidence="1">Binds 1 potassium ion per subunit.</text>
</comment>
<comment type="subunit">
    <text evidence="1">Homodimer. Heterotetramer of two MnmE and two MnmG subunits.</text>
</comment>
<comment type="subcellular location">
    <subcellularLocation>
        <location evidence="1">Cytoplasm</location>
    </subcellularLocation>
</comment>
<comment type="similarity">
    <text evidence="1">Belongs to the TRAFAC class TrmE-Era-EngA-EngB-Septin-like GTPase superfamily. TrmE GTPase family.</text>
</comment>
<name>MNME_MESFL</name>
<proteinExistence type="inferred from homology"/>
<organism>
    <name type="scientific">Mesoplasma florum (strain ATCC 33453 / NBRC 100688 / NCTC 11704 / L1)</name>
    <name type="common">Acholeplasma florum</name>
    <dbReference type="NCBI Taxonomy" id="265311"/>
    <lineage>
        <taxon>Bacteria</taxon>
        <taxon>Bacillati</taxon>
        <taxon>Mycoplasmatota</taxon>
        <taxon>Mollicutes</taxon>
        <taxon>Entomoplasmatales</taxon>
        <taxon>Entomoplasmataceae</taxon>
        <taxon>Mesoplasma</taxon>
    </lineage>
</organism>
<accession>Q6F2A3</accession>
<dbReference type="EC" id="3.6.-.-" evidence="1"/>
<dbReference type="EMBL" id="AE017263">
    <property type="protein sequence ID" value="AAT75370.1"/>
    <property type="molecule type" value="Genomic_DNA"/>
</dbReference>
<dbReference type="RefSeq" id="WP_011182911.1">
    <property type="nucleotide sequence ID" value="NC_006055.1"/>
</dbReference>
<dbReference type="RefSeq" id="YP_053254.1">
    <property type="nucleotide sequence ID" value="NC_006055.1"/>
</dbReference>
<dbReference type="SMR" id="Q6F2A3"/>
<dbReference type="STRING" id="265311.Mfl014"/>
<dbReference type="PaxDb" id="265311-Mfl014"/>
<dbReference type="EnsemblBacteria" id="AAT75370">
    <property type="protein sequence ID" value="AAT75370"/>
    <property type="gene ID" value="Mfl014"/>
</dbReference>
<dbReference type="GeneID" id="2898206"/>
<dbReference type="KEGG" id="mfl:Mfl014"/>
<dbReference type="PATRIC" id="fig|265311.5.peg.14"/>
<dbReference type="eggNOG" id="COG0486">
    <property type="taxonomic scope" value="Bacteria"/>
</dbReference>
<dbReference type="HOGENOM" id="CLU_019624_4_1_14"/>
<dbReference type="OrthoDB" id="9805918at2"/>
<dbReference type="Proteomes" id="UP000006647">
    <property type="component" value="Chromosome"/>
</dbReference>
<dbReference type="GO" id="GO:0005829">
    <property type="term" value="C:cytosol"/>
    <property type="evidence" value="ECO:0007669"/>
    <property type="project" value="TreeGrafter"/>
</dbReference>
<dbReference type="GO" id="GO:0005525">
    <property type="term" value="F:GTP binding"/>
    <property type="evidence" value="ECO:0007669"/>
    <property type="project" value="UniProtKB-UniRule"/>
</dbReference>
<dbReference type="GO" id="GO:0003924">
    <property type="term" value="F:GTPase activity"/>
    <property type="evidence" value="ECO:0007669"/>
    <property type="project" value="UniProtKB-UniRule"/>
</dbReference>
<dbReference type="GO" id="GO:0046872">
    <property type="term" value="F:metal ion binding"/>
    <property type="evidence" value="ECO:0007669"/>
    <property type="project" value="UniProtKB-KW"/>
</dbReference>
<dbReference type="GO" id="GO:0030488">
    <property type="term" value="P:tRNA methylation"/>
    <property type="evidence" value="ECO:0007669"/>
    <property type="project" value="TreeGrafter"/>
</dbReference>
<dbReference type="GO" id="GO:0002098">
    <property type="term" value="P:tRNA wobble uridine modification"/>
    <property type="evidence" value="ECO:0007669"/>
    <property type="project" value="TreeGrafter"/>
</dbReference>
<dbReference type="CDD" id="cd04164">
    <property type="entry name" value="trmE"/>
    <property type="match status" value="1"/>
</dbReference>
<dbReference type="CDD" id="cd14858">
    <property type="entry name" value="TrmE_N"/>
    <property type="match status" value="1"/>
</dbReference>
<dbReference type="FunFam" id="3.40.50.300:FF:001376">
    <property type="entry name" value="tRNA modification GTPase MnmE"/>
    <property type="match status" value="1"/>
</dbReference>
<dbReference type="Gene3D" id="3.40.50.300">
    <property type="entry name" value="P-loop containing nucleotide triphosphate hydrolases"/>
    <property type="match status" value="1"/>
</dbReference>
<dbReference type="Gene3D" id="3.30.1360.120">
    <property type="entry name" value="Probable tRNA modification gtpase trme, domain 1"/>
    <property type="match status" value="1"/>
</dbReference>
<dbReference type="Gene3D" id="1.20.120.430">
    <property type="entry name" value="tRNA modification GTPase MnmE domain 2"/>
    <property type="match status" value="1"/>
</dbReference>
<dbReference type="HAMAP" id="MF_00379">
    <property type="entry name" value="GTPase_MnmE"/>
    <property type="match status" value="1"/>
</dbReference>
<dbReference type="InterPro" id="IPR031168">
    <property type="entry name" value="G_TrmE"/>
</dbReference>
<dbReference type="InterPro" id="IPR006073">
    <property type="entry name" value="GTP-bd"/>
</dbReference>
<dbReference type="InterPro" id="IPR018948">
    <property type="entry name" value="GTP-bd_TrmE_N"/>
</dbReference>
<dbReference type="InterPro" id="IPR004520">
    <property type="entry name" value="GTPase_MnmE"/>
</dbReference>
<dbReference type="InterPro" id="IPR027368">
    <property type="entry name" value="MnmE_dom2"/>
</dbReference>
<dbReference type="InterPro" id="IPR025867">
    <property type="entry name" value="MnmE_helical"/>
</dbReference>
<dbReference type="InterPro" id="IPR027417">
    <property type="entry name" value="P-loop_NTPase"/>
</dbReference>
<dbReference type="InterPro" id="IPR005225">
    <property type="entry name" value="Small_GTP-bd"/>
</dbReference>
<dbReference type="InterPro" id="IPR027266">
    <property type="entry name" value="TrmE/GcvT_dom1"/>
</dbReference>
<dbReference type="NCBIfam" id="TIGR00450">
    <property type="entry name" value="mnmE_trmE_thdF"/>
    <property type="match status" value="1"/>
</dbReference>
<dbReference type="NCBIfam" id="TIGR00231">
    <property type="entry name" value="small_GTP"/>
    <property type="match status" value="1"/>
</dbReference>
<dbReference type="PANTHER" id="PTHR42714">
    <property type="entry name" value="TRNA MODIFICATION GTPASE GTPBP3"/>
    <property type="match status" value="1"/>
</dbReference>
<dbReference type="PANTHER" id="PTHR42714:SF2">
    <property type="entry name" value="TRNA MODIFICATION GTPASE GTPBP3, MITOCHONDRIAL"/>
    <property type="match status" value="1"/>
</dbReference>
<dbReference type="Pfam" id="PF01926">
    <property type="entry name" value="MMR_HSR1"/>
    <property type="match status" value="1"/>
</dbReference>
<dbReference type="Pfam" id="PF12631">
    <property type="entry name" value="MnmE_helical"/>
    <property type="match status" value="1"/>
</dbReference>
<dbReference type="Pfam" id="PF10396">
    <property type="entry name" value="TrmE_N"/>
    <property type="match status" value="1"/>
</dbReference>
<dbReference type="PRINTS" id="PR00449">
    <property type="entry name" value="RASTRNSFRMNG"/>
</dbReference>
<dbReference type="SUPFAM" id="SSF52540">
    <property type="entry name" value="P-loop containing nucleoside triphosphate hydrolases"/>
    <property type="match status" value="1"/>
</dbReference>
<dbReference type="PROSITE" id="PS51709">
    <property type="entry name" value="G_TRME"/>
    <property type="match status" value="1"/>
</dbReference>